<name>RS11_SOLM1</name>
<proteinExistence type="inferred from homology"/>
<comment type="function">
    <text evidence="1">Located on the platform of the 30S subunit, it bridges several disparate RNA helices of the 16S rRNA. Forms part of the Shine-Dalgarno cleft in the 70S ribosome.</text>
</comment>
<comment type="subunit">
    <text evidence="1">Part of the 30S ribosomal subunit. Interacts with proteins S7 and S18. Binds to IF-3.</text>
</comment>
<comment type="similarity">
    <text evidence="1">Belongs to the universal ribosomal protein uS11 family.</text>
</comment>
<organism>
    <name type="scientific">Solidesulfovibrio magneticus (strain ATCC 700980 / DSM 13731 / RS-1)</name>
    <name type="common">Desulfovibrio magneticus</name>
    <dbReference type="NCBI Taxonomy" id="573370"/>
    <lineage>
        <taxon>Bacteria</taxon>
        <taxon>Pseudomonadati</taxon>
        <taxon>Thermodesulfobacteriota</taxon>
        <taxon>Desulfovibrionia</taxon>
        <taxon>Desulfovibrionales</taxon>
        <taxon>Desulfovibrionaceae</taxon>
        <taxon>Solidesulfovibrio</taxon>
    </lineage>
</organism>
<protein>
    <recommendedName>
        <fullName evidence="1">Small ribosomal subunit protein uS11</fullName>
    </recommendedName>
    <alternativeName>
        <fullName evidence="2">30S ribosomal protein S11</fullName>
    </alternativeName>
</protein>
<gene>
    <name evidence="1" type="primary">rpsK</name>
    <name type="ordered locus">DMR_12440</name>
</gene>
<evidence type="ECO:0000255" key="1">
    <source>
        <dbReference type="HAMAP-Rule" id="MF_01310"/>
    </source>
</evidence>
<evidence type="ECO:0000305" key="2"/>
<reference key="1">
    <citation type="journal article" date="2009" name="Genome Res.">
        <title>Whole genome sequence of Desulfovibrio magneticus strain RS-1 revealed common gene clusters in magnetotactic bacteria.</title>
        <authorList>
            <person name="Nakazawa H."/>
            <person name="Arakaki A."/>
            <person name="Narita-Yamada S."/>
            <person name="Yashiro I."/>
            <person name="Jinno K."/>
            <person name="Aoki N."/>
            <person name="Tsuruyama A."/>
            <person name="Okamura Y."/>
            <person name="Tanikawa S."/>
            <person name="Fujita N."/>
            <person name="Takeyama H."/>
            <person name="Matsunaga T."/>
        </authorList>
    </citation>
    <scope>NUCLEOTIDE SEQUENCE [LARGE SCALE GENOMIC DNA]</scope>
    <source>
        <strain>ATCC 700980 / DSM 13731 / RS-1</strain>
    </source>
</reference>
<accession>C4XLK1</accession>
<feature type="chain" id="PRO_1000214360" description="Small ribosomal subunit protein uS11">
    <location>
        <begin position="1"/>
        <end position="128"/>
    </location>
</feature>
<dbReference type="EMBL" id="AP010904">
    <property type="protein sequence ID" value="BAH74735.1"/>
    <property type="molecule type" value="Genomic_DNA"/>
</dbReference>
<dbReference type="RefSeq" id="WP_006920490.1">
    <property type="nucleotide sequence ID" value="NC_012796.1"/>
</dbReference>
<dbReference type="SMR" id="C4XLK1"/>
<dbReference type="STRING" id="573370.DMR_12440"/>
<dbReference type="KEGG" id="dma:DMR_12440"/>
<dbReference type="eggNOG" id="COG0100">
    <property type="taxonomic scope" value="Bacteria"/>
</dbReference>
<dbReference type="HOGENOM" id="CLU_072439_5_0_7"/>
<dbReference type="OrthoDB" id="9806415at2"/>
<dbReference type="Proteomes" id="UP000009071">
    <property type="component" value="Chromosome"/>
</dbReference>
<dbReference type="GO" id="GO:1990904">
    <property type="term" value="C:ribonucleoprotein complex"/>
    <property type="evidence" value="ECO:0007669"/>
    <property type="project" value="UniProtKB-KW"/>
</dbReference>
<dbReference type="GO" id="GO:0005840">
    <property type="term" value="C:ribosome"/>
    <property type="evidence" value="ECO:0007669"/>
    <property type="project" value="UniProtKB-KW"/>
</dbReference>
<dbReference type="GO" id="GO:0019843">
    <property type="term" value="F:rRNA binding"/>
    <property type="evidence" value="ECO:0007669"/>
    <property type="project" value="UniProtKB-UniRule"/>
</dbReference>
<dbReference type="GO" id="GO:0003735">
    <property type="term" value="F:structural constituent of ribosome"/>
    <property type="evidence" value="ECO:0007669"/>
    <property type="project" value="InterPro"/>
</dbReference>
<dbReference type="GO" id="GO:0006412">
    <property type="term" value="P:translation"/>
    <property type="evidence" value="ECO:0007669"/>
    <property type="project" value="UniProtKB-UniRule"/>
</dbReference>
<dbReference type="FunFam" id="3.30.420.80:FF:000001">
    <property type="entry name" value="30S ribosomal protein S11"/>
    <property type="match status" value="1"/>
</dbReference>
<dbReference type="Gene3D" id="3.30.420.80">
    <property type="entry name" value="Ribosomal protein S11"/>
    <property type="match status" value="1"/>
</dbReference>
<dbReference type="HAMAP" id="MF_01310">
    <property type="entry name" value="Ribosomal_uS11"/>
    <property type="match status" value="1"/>
</dbReference>
<dbReference type="InterPro" id="IPR001971">
    <property type="entry name" value="Ribosomal_uS11"/>
</dbReference>
<dbReference type="InterPro" id="IPR019981">
    <property type="entry name" value="Ribosomal_uS11_bac-type"/>
</dbReference>
<dbReference type="InterPro" id="IPR018102">
    <property type="entry name" value="Ribosomal_uS11_CS"/>
</dbReference>
<dbReference type="InterPro" id="IPR036967">
    <property type="entry name" value="Ribosomal_uS11_sf"/>
</dbReference>
<dbReference type="NCBIfam" id="NF003698">
    <property type="entry name" value="PRK05309.1"/>
    <property type="match status" value="1"/>
</dbReference>
<dbReference type="NCBIfam" id="TIGR03632">
    <property type="entry name" value="uS11_bact"/>
    <property type="match status" value="1"/>
</dbReference>
<dbReference type="PANTHER" id="PTHR11759">
    <property type="entry name" value="40S RIBOSOMAL PROTEIN S14/30S RIBOSOMAL PROTEIN S11"/>
    <property type="match status" value="1"/>
</dbReference>
<dbReference type="Pfam" id="PF00411">
    <property type="entry name" value="Ribosomal_S11"/>
    <property type="match status" value="1"/>
</dbReference>
<dbReference type="PIRSF" id="PIRSF002131">
    <property type="entry name" value="Ribosomal_S11"/>
    <property type="match status" value="1"/>
</dbReference>
<dbReference type="SUPFAM" id="SSF53137">
    <property type="entry name" value="Translational machinery components"/>
    <property type="match status" value="1"/>
</dbReference>
<dbReference type="PROSITE" id="PS00054">
    <property type="entry name" value="RIBOSOMAL_S11"/>
    <property type="match status" value="1"/>
</dbReference>
<keyword id="KW-0687">Ribonucleoprotein</keyword>
<keyword id="KW-0689">Ribosomal protein</keyword>
<keyword id="KW-0694">RNA-binding</keyword>
<keyword id="KW-0699">rRNA-binding</keyword>
<sequence>MAKPRRTGKKERKNIPVGVAHIQATFNNTIVTFTDQKGNVVSWATSGGAGFKGSRKSTPFAAQVAAENAARKAQENGMRTVGVLVKGPGSGREAAMRAIHNAGFKISYIRDITPIPHNGCRPPKRRRV</sequence>